<dbReference type="EMBL" id="CP001114">
    <property type="protein sequence ID" value="ACO47247.1"/>
    <property type="molecule type" value="Genomic_DNA"/>
</dbReference>
<dbReference type="RefSeq" id="WP_012694368.1">
    <property type="nucleotide sequence ID" value="NC_012526.1"/>
</dbReference>
<dbReference type="SMR" id="C1CZJ9"/>
<dbReference type="STRING" id="546414.Deide_22180"/>
<dbReference type="PaxDb" id="546414-Deide_22180"/>
<dbReference type="KEGG" id="ddr:Deide_22180"/>
<dbReference type="eggNOG" id="COG0261">
    <property type="taxonomic scope" value="Bacteria"/>
</dbReference>
<dbReference type="HOGENOM" id="CLU_061463_3_2_0"/>
<dbReference type="OrthoDB" id="9813334at2"/>
<dbReference type="Proteomes" id="UP000002208">
    <property type="component" value="Chromosome"/>
</dbReference>
<dbReference type="GO" id="GO:0005737">
    <property type="term" value="C:cytoplasm"/>
    <property type="evidence" value="ECO:0007669"/>
    <property type="project" value="UniProtKB-ARBA"/>
</dbReference>
<dbReference type="GO" id="GO:1990904">
    <property type="term" value="C:ribonucleoprotein complex"/>
    <property type="evidence" value="ECO:0007669"/>
    <property type="project" value="UniProtKB-KW"/>
</dbReference>
<dbReference type="GO" id="GO:0005840">
    <property type="term" value="C:ribosome"/>
    <property type="evidence" value="ECO:0007669"/>
    <property type="project" value="UniProtKB-KW"/>
</dbReference>
<dbReference type="GO" id="GO:0019843">
    <property type="term" value="F:rRNA binding"/>
    <property type="evidence" value="ECO:0007669"/>
    <property type="project" value="UniProtKB-UniRule"/>
</dbReference>
<dbReference type="GO" id="GO:0003735">
    <property type="term" value="F:structural constituent of ribosome"/>
    <property type="evidence" value="ECO:0007669"/>
    <property type="project" value="InterPro"/>
</dbReference>
<dbReference type="GO" id="GO:0006412">
    <property type="term" value="P:translation"/>
    <property type="evidence" value="ECO:0007669"/>
    <property type="project" value="UniProtKB-UniRule"/>
</dbReference>
<dbReference type="HAMAP" id="MF_01363">
    <property type="entry name" value="Ribosomal_bL21"/>
    <property type="match status" value="1"/>
</dbReference>
<dbReference type="InterPro" id="IPR028909">
    <property type="entry name" value="bL21-like"/>
</dbReference>
<dbReference type="InterPro" id="IPR036164">
    <property type="entry name" value="bL21-like_sf"/>
</dbReference>
<dbReference type="InterPro" id="IPR001787">
    <property type="entry name" value="Ribosomal_bL21"/>
</dbReference>
<dbReference type="NCBIfam" id="TIGR00061">
    <property type="entry name" value="L21"/>
    <property type="match status" value="1"/>
</dbReference>
<dbReference type="PANTHER" id="PTHR21349">
    <property type="entry name" value="50S RIBOSOMAL PROTEIN L21"/>
    <property type="match status" value="1"/>
</dbReference>
<dbReference type="PANTHER" id="PTHR21349:SF0">
    <property type="entry name" value="LARGE RIBOSOMAL SUBUNIT PROTEIN BL21M"/>
    <property type="match status" value="1"/>
</dbReference>
<dbReference type="Pfam" id="PF00829">
    <property type="entry name" value="Ribosomal_L21p"/>
    <property type="match status" value="1"/>
</dbReference>
<dbReference type="SUPFAM" id="SSF141091">
    <property type="entry name" value="L21p-like"/>
    <property type="match status" value="1"/>
</dbReference>
<gene>
    <name evidence="1" type="primary">rplU</name>
    <name type="ordered locus">Deide_22180</name>
</gene>
<protein>
    <recommendedName>
        <fullName evidence="1">Large ribosomal subunit protein bL21</fullName>
    </recommendedName>
    <alternativeName>
        <fullName evidence="2">50S ribosomal protein L21</fullName>
    </alternativeName>
</protein>
<evidence type="ECO:0000255" key="1">
    <source>
        <dbReference type="HAMAP-Rule" id="MF_01363"/>
    </source>
</evidence>
<evidence type="ECO:0000305" key="2"/>
<keyword id="KW-1185">Reference proteome</keyword>
<keyword id="KW-0687">Ribonucleoprotein</keyword>
<keyword id="KW-0689">Ribosomal protein</keyword>
<keyword id="KW-0694">RNA-binding</keyword>
<keyword id="KW-0699">rRNA-binding</keyword>
<sequence>MFAIIQTGGKQYRVQEGDVIRVENLKGEAGDKLDLTPLFVGGDQALFGDAVSNFVVNAEVVEHGRGPKIYIRKYKSGVQYRRRTGHRQDYTAIKILGIKG</sequence>
<proteinExistence type="inferred from homology"/>
<organism>
    <name type="scientific">Deinococcus deserti (strain DSM 17065 / CIP 109153 / LMG 22923 / VCD115)</name>
    <dbReference type="NCBI Taxonomy" id="546414"/>
    <lineage>
        <taxon>Bacteria</taxon>
        <taxon>Thermotogati</taxon>
        <taxon>Deinococcota</taxon>
        <taxon>Deinococci</taxon>
        <taxon>Deinococcales</taxon>
        <taxon>Deinococcaceae</taxon>
        <taxon>Deinococcus</taxon>
    </lineage>
</organism>
<name>RL21_DEIDV</name>
<accession>C1CZJ9</accession>
<reference key="1">
    <citation type="journal article" date="2009" name="PLoS Genet.">
        <title>Alliance of proteomics and genomics to unravel the specificities of Sahara bacterium Deinococcus deserti.</title>
        <authorList>
            <person name="de Groot A."/>
            <person name="Dulermo R."/>
            <person name="Ortet P."/>
            <person name="Blanchard L."/>
            <person name="Guerin P."/>
            <person name="Fernandez B."/>
            <person name="Vacherie B."/>
            <person name="Dossat C."/>
            <person name="Jolivet E."/>
            <person name="Siguier P."/>
            <person name="Chandler M."/>
            <person name="Barakat M."/>
            <person name="Dedieu A."/>
            <person name="Barbe V."/>
            <person name="Heulin T."/>
            <person name="Sommer S."/>
            <person name="Achouak W."/>
            <person name="Armengaud J."/>
        </authorList>
    </citation>
    <scope>NUCLEOTIDE SEQUENCE [LARGE SCALE GENOMIC DNA]</scope>
    <source>
        <strain>DSM 17065 / CIP 109153 / LMG 22923 / VCD115</strain>
    </source>
</reference>
<comment type="function">
    <text evidence="1">This protein binds to 23S rRNA in the presence of protein L20.</text>
</comment>
<comment type="subunit">
    <text evidence="1">Part of the 50S ribosomal subunit. Contacts protein L20.</text>
</comment>
<comment type="similarity">
    <text evidence="1">Belongs to the bacterial ribosomal protein bL21 family.</text>
</comment>
<feature type="chain" id="PRO_1000214884" description="Large ribosomal subunit protein bL21">
    <location>
        <begin position="1"/>
        <end position="100"/>
    </location>
</feature>